<name>MJE1_VITVI</name>
<sequence length="261" mass="29486">MEKRERHFVLVHGACHGAWCWYKVTTFLRSAGHKVTALDLAAAGANGKRLDELNSISDYHEPLMKFMTSLVAGEKVILVAHSLGGVSVSVAMERFPQKISVAVFVSAYMPGPDFNLSTVYQELHQRRQGASKDTQYTFDRGSNNPPTSIIFSPEDLAAKLYQLSPPEDLTLATTLMRPTKLFRGENLLKETTVTREKYGTVRRVYIVCDKDNILKEDFQRWMIKNNPSDEVKVIMGSDHMPMFSKPLDLCAYLQEIVESYS</sequence>
<protein>
    <recommendedName>
        <fullName evidence="5">Methyl jasmonate esterase 1</fullName>
        <shortName evidence="5">VvMJE1</shortName>
        <ecNumber evidence="4">3.1.1.-</ecNumber>
    </recommendedName>
    <alternativeName>
        <fullName evidence="5">Methyl esterase 5</fullName>
        <shortName evidence="5">VvMES5</shortName>
    </alternativeName>
    <alternativeName>
        <fullName evidence="8">Salicylic acid-binding protein 2-4</fullName>
    </alternativeName>
</protein>
<keyword id="KW-0378">Hydrolase</keyword>
<keyword id="KW-1185">Reference proteome</keyword>
<gene>
    <name evidence="5" type="primary">MJE1</name>
    <name evidence="5" type="synonym">MES5</name>
    <name evidence="8" type="synonym">SABP2_4</name>
    <name evidence="8" type="ORF">CK203_096003</name>
    <name evidence="7" type="ORF">VIT_00s0253g00150</name>
</gene>
<dbReference type="EC" id="3.1.1.-" evidence="4"/>
<dbReference type="EMBL" id="FN594975">
    <property type="protein sequence ID" value="CBI18570.3"/>
    <property type="molecule type" value="Genomic_DNA"/>
</dbReference>
<dbReference type="EMBL" id="QGNW01001049">
    <property type="protein sequence ID" value="RVW57636.1"/>
    <property type="molecule type" value="Genomic_DNA"/>
</dbReference>
<dbReference type="RefSeq" id="XP_010646594.1">
    <property type="nucleotide sequence ID" value="XM_010648292.1"/>
</dbReference>
<dbReference type="SMR" id="D7SSD8"/>
<dbReference type="STRING" id="29760.D7SSD8"/>
<dbReference type="ESTHER" id="vitvi-d7ssd8">
    <property type="family name" value="Hydroxynitrile_lyase"/>
</dbReference>
<dbReference type="PaxDb" id="29760-VIT_00s0253g00150.t01"/>
<dbReference type="GeneID" id="100253882"/>
<dbReference type="KEGG" id="vvi:100253882"/>
<dbReference type="eggNOG" id="ENOG502QVWZ">
    <property type="taxonomic scope" value="Eukaryota"/>
</dbReference>
<dbReference type="HOGENOM" id="CLU_046066_0_1_1"/>
<dbReference type="InParanoid" id="D7SSD8"/>
<dbReference type="OMA" id="SISVYFE"/>
<dbReference type="UniPathway" id="UPA00382"/>
<dbReference type="Proteomes" id="UP000009183">
    <property type="component" value="Unassembled WGS sequence, unordered"/>
</dbReference>
<dbReference type="Proteomes" id="UP000288805">
    <property type="component" value="Unassembled WGS sequence"/>
</dbReference>
<dbReference type="GO" id="GO:0080030">
    <property type="term" value="F:methyl indole-3-acetate esterase activity"/>
    <property type="evidence" value="ECO:0000318"/>
    <property type="project" value="GO_Central"/>
</dbReference>
<dbReference type="GO" id="GO:0080032">
    <property type="term" value="F:methyl jasmonate esterase activity"/>
    <property type="evidence" value="ECO:0000314"/>
    <property type="project" value="UniProtKB"/>
</dbReference>
<dbReference type="GO" id="GO:0080031">
    <property type="term" value="F:methyl salicylate esterase activity"/>
    <property type="evidence" value="ECO:0000318"/>
    <property type="project" value="GO_Central"/>
</dbReference>
<dbReference type="GO" id="GO:0009694">
    <property type="term" value="P:jasmonic acid metabolic process"/>
    <property type="evidence" value="ECO:0000314"/>
    <property type="project" value="UniProtKB"/>
</dbReference>
<dbReference type="GO" id="GO:0031408">
    <property type="term" value="P:oxylipin biosynthetic process"/>
    <property type="evidence" value="ECO:0007669"/>
    <property type="project" value="UniProtKB-UniPathway"/>
</dbReference>
<dbReference type="GO" id="GO:0009409">
    <property type="term" value="P:response to cold"/>
    <property type="evidence" value="ECO:0000270"/>
    <property type="project" value="UniProtKB"/>
</dbReference>
<dbReference type="GO" id="GO:0010224">
    <property type="term" value="P:response to UV-B"/>
    <property type="evidence" value="ECO:0000270"/>
    <property type="project" value="UniProtKB"/>
</dbReference>
<dbReference type="GO" id="GO:0009696">
    <property type="term" value="P:salicylic acid metabolic process"/>
    <property type="evidence" value="ECO:0000318"/>
    <property type="project" value="GO_Central"/>
</dbReference>
<dbReference type="FunFam" id="3.40.50.1820:FF:000051">
    <property type="entry name" value="(S)-hydroxynitrile lyase"/>
    <property type="match status" value="1"/>
</dbReference>
<dbReference type="Gene3D" id="3.40.50.1820">
    <property type="entry name" value="alpha/beta hydrolase"/>
    <property type="match status" value="1"/>
</dbReference>
<dbReference type="InterPro" id="IPR000073">
    <property type="entry name" value="AB_hydrolase_1"/>
</dbReference>
<dbReference type="InterPro" id="IPR029058">
    <property type="entry name" value="AB_hydrolase_fold"/>
</dbReference>
<dbReference type="InterPro" id="IPR045889">
    <property type="entry name" value="MES/HNL"/>
</dbReference>
<dbReference type="PANTHER" id="PTHR10992:SF1066">
    <property type="entry name" value="METHYL JASMONATE ESTERASE 1"/>
    <property type="match status" value="1"/>
</dbReference>
<dbReference type="PANTHER" id="PTHR10992">
    <property type="entry name" value="METHYLESTERASE FAMILY MEMBER"/>
    <property type="match status" value="1"/>
</dbReference>
<dbReference type="Pfam" id="PF12697">
    <property type="entry name" value="Abhydrolase_6"/>
    <property type="match status" value="1"/>
</dbReference>
<dbReference type="SUPFAM" id="SSF53474">
    <property type="entry name" value="alpha/beta-Hydrolases"/>
    <property type="match status" value="1"/>
</dbReference>
<proteinExistence type="evidence at protein level"/>
<organism>
    <name type="scientific">Vitis vinifera</name>
    <name type="common">Grape</name>
    <dbReference type="NCBI Taxonomy" id="29760"/>
    <lineage>
        <taxon>Eukaryota</taxon>
        <taxon>Viridiplantae</taxon>
        <taxon>Streptophyta</taxon>
        <taxon>Embryophyta</taxon>
        <taxon>Tracheophyta</taxon>
        <taxon>Spermatophyta</taxon>
        <taxon>Magnoliopsida</taxon>
        <taxon>eudicotyledons</taxon>
        <taxon>Gunneridae</taxon>
        <taxon>Pentapetalae</taxon>
        <taxon>rosids</taxon>
        <taxon>Vitales</taxon>
        <taxon>Vitaceae</taxon>
        <taxon>Viteae</taxon>
        <taxon>Vitis</taxon>
    </lineage>
</organism>
<reference key="1">
    <citation type="journal article" date="2016" name="Plant Physiol. Biochem.">
        <title>VvMJE1 of the grapevine (Vitis vinifera) VvMES methylesterase family encodes for methyl jasmonate esterase and has a role in stress response.</title>
        <authorList>
            <person name="Zhao N."/>
            <person name="Lin H."/>
            <person name="Lan S."/>
            <person name="Jia Q."/>
            <person name="Chen X."/>
            <person name="Guo H."/>
            <person name="Chen F."/>
        </authorList>
    </citation>
    <scope>NUCLEOTIDE SEQUENCE [MRNA]</scope>
    <scope>FUNCTION</scope>
    <scope>CATALYTIC ACTIVITY</scope>
    <scope>BIOPHYSICOCHEMICAL PROPERTIES</scope>
    <scope>PATHWAY</scope>
    <scope>INDUCTION BY COLD AND UV-B</scope>
    <source>
        <strain>cv. Chardonnay</strain>
        <tissue>Leaf</tissue>
    </source>
</reference>
<reference key="2">
    <citation type="journal article" date="2007" name="Nature">
        <title>The grapevine genome sequence suggests ancestral hexaploidization in major angiosperm phyla.</title>
        <authorList>
            <person name="Jaillon O."/>
            <person name="Aury J.-M."/>
            <person name="Noel B."/>
            <person name="Policriti A."/>
            <person name="Clepet C."/>
            <person name="Casagrande A."/>
            <person name="Choisne N."/>
            <person name="Aubourg S."/>
            <person name="Vitulo N."/>
            <person name="Jubin C."/>
            <person name="Vezzi A."/>
            <person name="Legeai F."/>
            <person name="Hugueney P."/>
            <person name="Dasilva C."/>
            <person name="Horner D."/>
            <person name="Mica E."/>
            <person name="Jublot D."/>
            <person name="Poulain J."/>
            <person name="Bruyere C."/>
            <person name="Billault A."/>
            <person name="Segurens B."/>
            <person name="Gouyvenoux M."/>
            <person name="Ugarte E."/>
            <person name="Cattonaro F."/>
            <person name="Anthouard V."/>
            <person name="Vico V."/>
            <person name="Del Fabbro C."/>
            <person name="Alaux M."/>
            <person name="Di Gaspero G."/>
            <person name="Dumas V."/>
            <person name="Felice N."/>
            <person name="Paillard S."/>
            <person name="Juman I."/>
            <person name="Moroldo M."/>
            <person name="Scalabrin S."/>
            <person name="Canaguier A."/>
            <person name="Le Clainche I."/>
            <person name="Malacrida G."/>
            <person name="Durand E."/>
            <person name="Pesole G."/>
            <person name="Laucou V."/>
            <person name="Chatelet P."/>
            <person name="Merdinoglu D."/>
            <person name="Delledonne M."/>
            <person name="Pezzotti M."/>
            <person name="Lecharny A."/>
            <person name="Scarpelli C."/>
            <person name="Artiguenave F."/>
            <person name="Pe M.E."/>
            <person name="Valle G."/>
            <person name="Morgante M."/>
            <person name="Caboche M."/>
            <person name="Adam-Blondon A.-F."/>
            <person name="Weissenbach J."/>
            <person name="Quetier F."/>
            <person name="Wincker P."/>
        </authorList>
    </citation>
    <scope>NUCLEOTIDE SEQUENCE [LARGE SCALE GENOMIC DNA]</scope>
    <source>
        <strain>cv. Pinot noir / PN40024</strain>
    </source>
</reference>
<reference key="3">
    <citation type="journal article" date="2018" name="PLoS Genet.">
        <title>Population sequencing reveals clonal diversity and ancestral inbreeding in the grapevine cultivar Chardonnay.</title>
        <authorList>
            <person name="Roach M.J."/>
            <person name="Johnson D.L."/>
            <person name="Bohlmann J."/>
            <person name="van Vuuren H.J."/>
            <person name="Jones S.J."/>
            <person name="Pretorius I.S."/>
            <person name="Schmidt S.A."/>
            <person name="Borneman A.R."/>
        </authorList>
    </citation>
    <scope>NUCLEOTIDE SEQUENCE [LARGE SCALE GENOMIC DNA]</scope>
    <source>
        <strain>cv. Chardonnay</strain>
        <tissue>Leaf</tissue>
    </source>
</reference>
<evidence type="ECO:0000250" key="1">
    <source>
        <dbReference type="UniProtKB" id="Q6RYA0"/>
    </source>
</evidence>
<evidence type="ECO:0000250" key="2">
    <source>
        <dbReference type="UniProtKB" id="Q9SE93"/>
    </source>
</evidence>
<evidence type="ECO:0000255" key="3"/>
<evidence type="ECO:0000269" key="4">
    <source>
    </source>
</evidence>
<evidence type="ECO:0000303" key="5">
    <source>
    </source>
</evidence>
<evidence type="ECO:0000305" key="6"/>
<evidence type="ECO:0000312" key="7">
    <source>
        <dbReference type="EMBL" id="CBI18570.3"/>
    </source>
</evidence>
<evidence type="ECO:0000312" key="8">
    <source>
        <dbReference type="EMBL" id="RVW57636.1"/>
    </source>
</evidence>
<feature type="chain" id="PRO_0000454242" description="Methyl jasmonate esterase 1">
    <location>
        <begin position="1"/>
        <end position="261"/>
    </location>
</feature>
<feature type="domain" description="AB hydrolase-1" evidence="3">
    <location>
        <begin position="8"/>
        <end position="251"/>
    </location>
</feature>
<feature type="active site" description="Acyl-ester intermediate" evidence="1">
    <location>
        <position position="82"/>
    </location>
</feature>
<feature type="active site" description="Charge relay system" evidence="1">
    <location>
        <position position="211"/>
    </location>
</feature>
<feature type="active site" description="Charge relay system" evidence="1">
    <location>
        <position position="239"/>
    </location>
</feature>
<feature type="sequence conflict" description="In Ref. 3; RVW57636." evidence="6" ref="3">
    <original>R</original>
    <variation>H</variation>
    <location>
        <position position="202"/>
    </location>
</feature>
<comment type="function">
    <text evidence="4">Methylesterase that catalyzes the hydrolysis of methyl jasmonate (MeJA) into jasmonate (JA) (PubMed:26934101). Can also use methyl salicylate (MeSA) as substrate with a lower efficiency (PubMed:26934101).</text>
</comment>
<comment type="catalytic activity">
    <reaction evidence="4">
        <text>methyl (-)-jasmonate + H2O = jasmonate + methanol + H(+)</text>
        <dbReference type="Rhea" id="RHEA:55372"/>
        <dbReference type="ChEBI" id="CHEBI:15377"/>
        <dbReference type="ChEBI" id="CHEBI:15378"/>
        <dbReference type="ChEBI" id="CHEBI:15929"/>
        <dbReference type="ChEBI" id="CHEBI:17790"/>
        <dbReference type="ChEBI" id="CHEBI:58431"/>
    </reaction>
    <physiologicalReaction direction="left-to-right" evidence="4">
        <dbReference type="Rhea" id="RHEA:55373"/>
    </physiologicalReaction>
</comment>
<comment type="catalytic activity">
    <reaction evidence="4">
        <text>methyl salicylate + H2O = salicylate + methanol + H(+)</text>
        <dbReference type="Rhea" id="RHEA:33611"/>
        <dbReference type="ChEBI" id="CHEBI:15377"/>
        <dbReference type="ChEBI" id="CHEBI:15378"/>
        <dbReference type="ChEBI" id="CHEBI:17790"/>
        <dbReference type="ChEBI" id="CHEBI:30762"/>
        <dbReference type="ChEBI" id="CHEBI:31832"/>
    </reaction>
    <physiologicalReaction direction="left-to-right" evidence="4">
        <dbReference type="Rhea" id="RHEA:33612"/>
    </physiologicalReaction>
</comment>
<comment type="biophysicochemical properties">
    <kinetics>
        <KM evidence="4">92.9 uM for methyl jasmonate</KM>
    </kinetics>
</comment>
<comment type="pathway">
    <text evidence="4">Plant hormone biosynthesis.</text>
</comment>
<comment type="pathway">
    <text evidence="4">Lipid metabolism; oxylipin biosynthesis.</text>
</comment>
<comment type="subunit">
    <text evidence="2">Homodimer.</text>
</comment>
<comment type="induction">
    <text evidence="4">By cold and UV-B.</text>
</comment>
<comment type="similarity">
    <text evidence="6">Belongs to the AB hydrolase superfamily. Methylesterase family.</text>
</comment>
<accession>D7SSD8</accession>
<accession>A0A438FCE1</accession>